<accession>O53500</accession>
<accession>I6X378</accession>
<accession>L0TBD3</accession>
<organism>
    <name type="scientific">Mycobacterium tuberculosis (strain ATCC 25618 / H37Rv)</name>
    <dbReference type="NCBI Taxonomy" id="83332"/>
    <lineage>
        <taxon>Bacteria</taxon>
        <taxon>Bacillati</taxon>
        <taxon>Actinomycetota</taxon>
        <taxon>Actinomycetes</taxon>
        <taxon>Mycobacteriales</taxon>
        <taxon>Mycobacteriaceae</taxon>
        <taxon>Mycobacterium</taxon>
        <taxon>Mycobacterium tuberculosis complex</taxon>
    </lineage>
</organism>
<keyword id="KW-0479">Metal-binding</keyword>
<keyword id="KW-1185">Reference proteome</keyword>
<keyword id="KW-0862">Zinc</keyword>
<keyword id="KW-0863">Zinc-finger</keyword>
<proteinExistence type="evidence at protein level"/>
<name>Y2102_MYCTU</name>
<gene>
    <name evidence="3" type="ordered locus">Rv2102</name>
    <name evidence="2" type="ordered locus">RVBD_2102</name>
    <name evidence="4" type="ORF">P425_02177</name>
</gene>
<comment type="sequence caution">
    <conflict type="erroneous initiation">
        <sequence resource="EMBL-CDS" id="AFN50046"/>
    </conflict>
    <text>Truncated N-terminus.</text>
</comment>
<comment type="sequence caution">
    <conflict type="erroneous initiation">
        <sequence resource="EMBL-CDS" id="CCP44877"/>
    </conflict>
    <text>Truncated N-terminus.</text>
</comment>
<comment type="sequence caution">
    <conflict type="erroneous initiation">
        <sequence resource="EMBL-CDS" id="KBJ32895"/>
    </conflict>
    <text>Truncated N-terminus.</text>
</comment>
<feature type="chain" id="PRO_0000432518" description="Uncharacterized protein Rv2102">
    <location>
        <begin position="1"/>
        <end position="277"/>
    </location>
</feature>
<feature type="zinc finger region" description="SWIM-type" evidence="1">
    <location>
        <begin position="139"/>
        <end position="167"/>
    </location>
</feature>
<dbReference type="EMBL" id="AL123456">
    <property type="protein sequence ID" value="CCP44877.1"/>
    <property type="status" value="ALT_INIT"/>
    <property type="molecule type" value="Genomic_DNA"/>
</dbReference>
<dbReference type="EMBL" id="CP003248">
    <property type="protein sequence ID" value="AFN50046.1"/>
    <property type="status" value="ALT_INIT"/>
    <property type="molecule type" value="Genomic_DNA"/>
</dbReference>
<dbReference type="EMBL" id="JLDD01000026">
    <property type="protein sequence ID" value="KBJ32895.1"/>
    <property type="status" value="ALT_INIT"/>
    <property type="molecule type" value="Genomic_DNA"/>
</dbReference>
<dbReference type="RefSeq" id="NP_216618.1">
    <property type="nucleotide sequence ID" value="NC_000962.3"/>
</dbReference>
<dbReference type="RefSeq" id="WP_003410793.1">
    <property type="nucleotide sequence ID" value="NC_000962.3"/>
</dbReference>
<dbReference type="RefSeq" id="WP_003899172.1">
    <property type="nucleotide sequence ID" value="NZ_NVQJ01000084.1"/>
</dbReference>
<dbReference type="PaxDb" id="83332-Rv2102"/>
<dbReference type="DNASU" id="888639"/>
<dbReference type="GeneID" id="888639"/>
<dbReference type="KEGG" id="mtu:Rv2102"/>
<dbReference type="KEGG" id="mtv:RVBD_2102"/>
<dbReference type="PATRIC" id="fig|83332.111.peg.2342"/>
<dbReference type="TubercuList" id="Rv2102"/>
<dbReference type="eggNOG" id="COG4279">
    <property type="taxonomic scope" value="Bacteria"/>
</dbReference>
<dbReference type="InParanoid" id="O53500"/>
<dbReference type="OrthoDB" id="188274at2"/>
<dbReference type="Proteomes" id="UP000001584">
    <property type="component" value="Chromosome"/>
</dbReference>
<dbReference type="GO" id="GO:0008270">
    <property type="term" value="F:zinc ion binding"/>
    <property type="evidence" value="ECO:0007669"/>
    <property type="project" value="UniProtKB-KW"/>
</dbReference>
<dbReference type="InterPro" id="IPR007527">
    <property type="entry name" value="Znf_SWIM"/>
</dbReference>
<dbReference type="PANTHER" id="PTHR38133">
    <property type="entry name" value="SLR1429 PROTEIN"/>
    <property type="match status" value="1"/>
</dbReference>
<dbReference type="PANTHER" id="PTHR38133:SF1">
    <property type="entry name" value="SLR1429 PROTEIN"/>
    <property type="match status" value="1"/>
</dbReference>
<dbReference type="Pfam" id="PF04434">
    <property type="entry name" value="SWIM"/>
    <property type="match status" value="1"/>
</dbReference>
<dbReference type="PROSITE" id="PS50966">
    <property type="entry name" value="ZF_SWIM"/>
    <property type="match status" value="1"/>
</dbReference>
<sequence length="277" mass="30165">MSSTWYPPPSRPRPVEGGIKARSTRGAIAQTWWSERFIAVLEDIGLGNRLQRGRSYARKGQVISLQVDAGLVTALVQGSRARPYRIRIGIPAFGKSQWAHVERTLAENAWYAAKLLSGEMPEDIEDVFAGLGLSLFPGTARELSLDCSCPDYAVPCKHLAATFYLLAESFDEDPFAILAWRGREREDLLANLAAARADGAAPAADHAEQVAQPLTDCLDRYYARQADINVPSPPATPSTALLDQLPDTGLSARGRPLTELLRPAYHALTHHHNSAGG</sequence>
<reference key="1">
    <citation type="journal article" date="1998" name="Nature">
        <title>Deciphering the biology of Mycobacterium tuberculosis from the complete genome sequence.</title>
        <authorList>
            <person name="Cole S.T."/>
            <person name="Brosch R."/>
            <person name="Parkhill J."/>
            <person name="Garnier T."/>
            <person name="Churcher C.M."/>
            <person name="Harris D.E."/>
            <person name="Gordon S.V."/>
            <person name="Eiglmeier K."/>
            <person name="Gas S."/>
            <person name="Barry C.E. III"/>
            <person name="Tekaia F."/>
            <person name="Badcock K."/>
            <person name="Basham D."/>
            <person name="Brown D."/>
            <person name="Chillingworth T."/>
            <person name="Connor R."/>
            <person name="Davies R.M."/>
            <person name="Devlin K."/>
            <person name="Feltwell T."/>
            <person name="Gentles S."/>
            <person name="Hamlin N."/>
            <person name="Holroyd S."/>
            <person name="Hornsby T."/>
            <person name="Jagels K."/>
            <person name="Krogh A."/>
            <person name="McLean J."/>
            <person name="Moule S."/>
            <person name="Murphy L.D."/>
            <person name="Oliver S."/>
            <person name="Osborne J."/>
            <person name="Quail M.A."/>
            <person name="Rajandream M.A."/>
            <person name="Rogers J."/>
            <person name="Rutter S."/>
            <person name="Seeger K."/>
            <person name="Skelton S."/>
            <person name="Squares S."/>
            <person name="Squares R."/>
            <person name="Sulston J.E."/>
            <person name="Taylor K."/>
            <person name="Whitehead S."/>
            <person name="Barrell B.G."/>
        </authorList>
    </citation>
    <scope>NUCLEOTIDE SEQUENCE [LARGE SCALE GENOMIC DNA]</scope>
    <source>
        <strain>ATCC 25618 / H37Rv</strain>
    </source>
</reference>
<reference key="2">
    <citation type="submission" date="2013-11" db="EMBL/GenBank/DDBJ databases">
        <title>The genome sequence of Mycobacterium tuberculosis H37Rv.</title>
        <authorList>
            <consortium name="The Broad Institute Genome Sequencing Platform"/>
            <person name="Galagan J."/>
            <person name="Kreiswirth B."/>
            <person name="Dobos K."/>
            <person name="Fortune S."/>
            <person name="Fitzgerald M."/>
            <person name="Young S.K."/>
            <person name="Zeng Q."/>
            <person name="Gargeya S."/>
            <person name="Abouelleil A."/>
            <person name="Alvarado L."/>
            <person name="Berlin A.M."/>
            <person name="Chapman S.B."/>
            <person name="Gainer-Dewar J."/>
            <person name="Goldberg J."/>
            <person name="Gnerre S."/>
            <person name="Griggs A."/>
            <person name="Gujja S."/>
            <person name="Hansen M."/>
            <person name="Howarth C."/>
            <person name="Imamovic A."/>
            <person name="Larimer J."/>
            <person name="McCowan C."/>
            <person name="Murphy C."/>
            <person name="Pearson M."/>
            <person name="Poon T."/>
            <person name="Priest M."/>
            <person name="Roberts A."/>
            <person name="Saif S."/>
            <person name="Shea T."/>
            <person name="Sykes S."/>
            <person name="Wortman J."/>
            <person name="Nusbaum C."/>
            <person name="Birren B."/>
        </authorList>
    </citation>
    <scope>NUCLEOTIDE SEQUENCE [LARGE SCALE GENOMIC DNA]</scope>
    <source>
        <strain>ATCC 25618 / H37Rv</strain>
    </source>
</reference>
<reference key="3">
    <citation type="submission" date="2014-04" db="EMBL/GenBank/DDBJ databases">
        <title>The genome sequence of Mycobacterium tuberculosis H37Rv.</title>
        <authorList>
            <consortium name="The Broad Institute Genomics Platform"/>
            <consortium name="The Broad Institute Genome Sequencing Center for Infectious Disease"/>
            <person name="Earl A.M."/>
            <person name="Kreiswirth B."/>
            <person name="Gomez J."/>
            <person name="Victor T."/>
            <person name="Desjardins C."/>
            <person name="Abeel T."/>
            <person name="Young S."/>
            <person name="Zeng Q."/>
            <person name="Gargeya S."/>
            <person name="Abouelleil A."/>
            <person name="Alvarado L."/>
            <person name="Chapman S.B."/>
            <person name="Gainer-Dewar J."/>
            <person name="Goldberg J."/>
            <person name="Griggs A."/>
            <person name="Gujja S."/>
            <person name="Hansen M."/>
            <person name="Howarth C."/>
            <person name="Imamovic A."/>
            <person name="Larimer J."/>
            <person name="Murphy C."/>
            <person name="Naylor J."/>
            <person name="Pearson M."/>
            <person name="Poon T.W."/>
            <person name="Priest M."/>
            <person name="Roberts A."/>
            <person name="Saif S."/>
            <person name="Shea T."/>
            <person name="Sykes S."/>
            <person name="Wortman J."/>
            <person name="Nusbaum C."/>
            <person name="Birren B."/>
        </authorList>
    </citation>
    <scope>NUCLEOTIDE SEQUENCE [LARGE SCALE GENOMIC DNA]</scope>
    <source>
        <strain>ATCC 25618 / H37Rv</strain>
    </source>
</reference>
<reference key="4">
    <citation type="journal article" date="2011" name="Mol. Cell. Proteomics">
        <title>Proteogenomic analysis of Mycobacterium tuberculosis by high resolution mass spectrometry.</title>
        <authorList>
            <person name="Kelkar D.S."/>
            <person name="Kumar D."/>
            <person name="Kumar P."/>
            <person name="Balakrishnan L."/>
            <person name="Muthusamy B."/>
            <person name="Yadav A.K."/>
            <person name="Shrivastava P."/>
            <person name="Marimuthu A."/>
            <person name="Anand S."/>
            <person name="Sundaram H."/>
            <person name="Kingsbury R."/>
            <person name="Harsha H.C."/>
            <person name="Nair B."/>
            <person name="Prasad T.S."/>
            <person name="Chauhan D.S."/>
            <person name="Katoch K."/>
            <person name="Katoch V.M."/>
            <person name="Kumar P."/>
            <person name="Chaerkady R."/>
            <person name="Ramachandran S."/>
            <person name="Dash D."/>
            <person name="Pandey A."/>
        </authorList>
    </citation>
    <scope>IDENTIFICATION BY MASS SPECTROMETRY [LARGE SCALE ANALYSIS]</scope>
    <source>
        <strain>ATCC 25618 / H37Rv</strain>
    </source>
</reference>
<evidence type="ECO:0000255" key="1">
    <source>
        <dbReference type="PROSITE-ProRule" id="PRU00325"/>
    </source>
</evidence>
<evidence type="ECO:0000312" key="2">
    <source>
        <dbReference type="EMBL" id="AFN50046.1"/>
    </source>
</evidence>
<evidence type="ECO:0000312" key="3">
    <source>
        <dbReference type="EMBL" id="CCP44877.1"/>
    </source>
</evidence>
<evidence type="ECO:0000312" key="4">
    <source>
        <dbReference type="EMBL" id="KBJ32895.1"/>
    </source>
</evidence>
<protein>
    <recommendedName>
        <fullName>Uncharacterized protein Rv2102</fullName>
    </recommendedName>
</protein>